<protein>
    <recommendedName>
        <fullName>Polyphenol oxidase, chloroplastic</fullName>
        <shortName>PPO</shortName>
        <ecNumber>1.10.3.1</ecNumber>
    </recommendedName>
    <alternativeName>
        <fullName>Catechol oxidase</fullName>
    </alternativeName>
</protein>
<organism>
    <name type="scientific">Vitis vinifera</name>
    <name type="common">Grape</name>
    <dbReference type="NCBI Taxonomy" id="29760"/>
    <lineage>
        <taxon>Eukaryota</taxon>
        <taxon>Viridiplantae</taxon>
        <taxon>Streptophyta</taxon>
        <taxon>Embryophyta</taxon>
        <taxon>Tracheophyta</taxon>
        <taxon>Spermatophyta</taxon>
        <taxon>Magnoliopsida</taxon>
        <taxon>eudicotyledons</taxon>
        <taxon>Gunneridae</taxon>
        <taxon>Pentapetalae</taxon>
        <taxon>rosids</taxon>
        <taxon>Vitales</taxon>
        <taxon>Vitaceae</taxon>
        <taxon>Viteae</taxon>
        <taxon>Vitis</taxon>
    </lineage>
</organism>
<proteinExistence type="evidence at protein level"/>
<accession>P43311</accession>
<sequence>MASLPWSLTTSTAIANTTNISAFPPSPLFQRASHVPVARNRSRRFAPSKVSCNSANGDPNSDSTSDVRETSSGKLDRRNVLLGIGGLYGAAGGLGATKPLAFGAPIQAPDISKCGTATVPDGVTPTNCCPPVTTKIIDFQLPSSGSPMRTRPAAHLVSKEYLAKYKKAIELQKALPDDDPRSFKQQANVHCTYCQGAYDQVGYTDLELQVHASWLFLPFHRYYLYFNERILAKLIDDPTFALPYWAWDNPDGMYMPTIYASSPSSLYDEKRNAKHLPPTVIDLDYDGTEPTIPDDELKTDNLAIMYKQIVSGATTPKLFLGYPYRAGDAIDPGAGTLEHAPHNIVHKWTGLADKPSEDMGNFYTAGRDPIFFGHHANVDRMWNIWKTIGGKNRKDFTDTDWLDATFVFYDENKQLVKVKVSDCVDTSKLRYQYQDIPIPWLPKNTKAKAKTTTKSSKSGVAKAAELPKTTISSIGDFPKALNSVIRVEVPRPKKSRSKKEKEDEEEVLLIKGIELDRENFVKFDVYINDEDYSVSRPKNSEFAGSFVNVPHKHMKEMKTKTNLRFAINELLEDLGAEDDESVIVTIVPRAGGDDVTIGGIEIEFVSD</sequence>
<keyword id="KW-0002">3D-structure</keyword>
<keyword id="KW-0150">Chloroplast</keyword>
<keyword id="KW-0186">Copper</keyword>
<keyword id="KW-1015">Disulfide bond</keyword>
<keyword id="KW-0479">Metal-binding</keyword>
<keyword id="KW-0560">Oxidoreductase</keyword>
<keyword id="KW-0934">Plastid</keyword>
<keyword id="KW-0883">Thioether bond</keyword>
<keyword id="KW-0793">Thylakoid</keyword>
<keyword id="KW-0809">Transit peptide</keyword>
<reference key="1">
    <citation type="journal article" date="1994" name="Plant Mol. Biol.">
        <title>Molecular cloning and characterisation of grape berry polyphenol oxidase.</title>
        <authorList>
            <person name="Dry I.B."/>
            <person name="Robinson S.P."/>
        </authorList>
    </citation>
    <scope>NUCLEOTIDE SEQUENCE [MRNA]</scope>
    <source>
        <strain>cv. Sultana</strain>
        <tissue>Fruit</tissue>
    </source>
</reference>
<reference key="2">
    <citation type="journal article" date="2010" name="J. Agric. Food Chem.">
        <title>Cloning, sequencing, purification, and crystal structure of Grenache (Vitis vinifera) polyphenol oxidase.</title>
        <authorList>
            <person name="Virador V.M."/>
            <person name="Reyes Grajeda J.P."/>
            <person name="Blanco-Labra A."/>
            <person name="Mendiola-Olaya E."/>
            <person name="Smith G.M."/>
            <person name="Moreno A."/>
            <person name="Whitaker J.R."/>
        </authorList>
    </citation>
    <scope>X-RAY CRYSTALLOGRAPHY (2.20 ANGSTROMS) OF 104-442 IN COMPLEX WITH COPPER IONS</scope>
    <scope>FUNCTION</scope>
    <scope>CATALYTIC ACTIVITY</scope>
    <scope>DISULFIDE BONDS</scope>
    <scope>COFACTOR</scope>
</reference>
<feature type="transit peptide" description="Chloroplast" evidence="2">
    <location>
        <begin position="1"/>
        <end position="103"/>
    </location>
</feature>
<feature type="chain" id="PRO_0000035920" description="Polyphenol oxidase, chloroplastic">
    <location>
        <begin position="104"/>
        <end position="607"/>
    </location>
</feature>
<feature type="region of interest" description="Disordered" evidence="3">
    <location>
        <begin position="39"/>
        <end position="73"/>
    </location>
</feature>
<feature type="compositionally biased region" description="Polar residues" evidence="3">
    <location>
        <begin position="50"/>
        <end position="64"/>
    </location>
</feature>
<feature type="binding site" evidence="4">
    <location>
        <position position="190"/>
    </location>
    <ligand>
        <name>Cu cation</name>
        <dbReference type="ChEBI" id="CHEBI:23378"/>
        <label>A</label>
    </ligand>
</feature>
<feature type="binding site" evidence="4">
    <location>
        <position position="211"/>
    </location>
    <ligand>
        <name>Cu cation</name>
        <dbReference type="ChEBI" id="CHEBI:23378"/>
        <label>A</label>
    </ligand>
</feature>
<feature type="binding site" evidence="4">
    <location>
        <position position="220"/>
    </location>
    <ligand>
        <name>Cu cation</name>
        <dbReference type="ChEBI" id="CHEBI:23378"/>
        <label>A</label>
    </ligand>
</feature>
<feature type="binding site" evidence="4">
    <location>
        <position position="342"/>
    </location>
    <ligand>
        <name>Cu cation</name>
        <dbReference type="ChEBI" id="CHEBI:23378"/>
        <label>B</label>
    </ligand>
</feature>
<feature type="binding site" evidence="4">
    <location>
        <position position="346"/>
    </location>
    <ligand>
        <name>Cu cation</name>
        <dbReference type="ChEBI" id="CHEBI:23378"/>
        <label>B</label>
    </ligand>
</feature>
<feature type="binding site" evidence="4">
    <location>
        <position position="375"/>
    </location>
    <ligand>
        <name>Cu cation</name>
        <dbReference type="ChEBI" id="CHEBI:23378"/>
        <label>B</label>
    </ligand>
</feature>
<feature type="disulfide bond" evidence="4">
    <location>
        <begin position="114"/>
        <end position="129"/>
    </location>
</feature>
<feature type="disulfide bond" evidence="4">
    <location>
        <begin position="128"/>
        <end position="191"/>
    </location>
</feature>
<feature type="cross-link" description="2'-(S-cysteinyl)-histidine (Cys-His)" evidence="1">
    <location>
        <begin position="194"/>
        <end position="211"/>
    </location>
</feature>
<feature type="helix" evidence="6">
    <location>
        <begin position="111"/>
        <end position="113"/>
    </location>
</feature>
<feature type="strand" evidence="6">
    <location>
        <begin position="136"/>
        <end position="138"/>
    </location>
</feature>
<feature type="strand" evidence="6">
    <location>
        <begin position="144"/>
        <end position="146"/>
    </location>
</feature>
<feature type="strand" evidence="6">
    <location>
        <begin position="149"/>
        <end position="151"/>
    </location>
</feature>
<feature type="helix" evidence="6">
    <location>
        <begin position="154"/>
        <end position="156"/>
    </location>
</feature>
<feature type="helix" evidence="6">
    <location>
        <begin position="159"/>
        <end position="173"/>
    </location>
</feature>
<feature type="helix" evidence="6">
    <location>
        <begin position="183"/>
        <end position="194"/>
    </location>
</feature>
<feature type="strand" evidence="6">
    <location>
        <begin position="211"/>
        <end position="213"/>
    </location>
</feature>
<feature type="helix" evidence="6">
    <location>
        <begin position="216"/>
        <end position="234"/>
    </location>
</feature>
<feature type="helix" evidence="6">
    <location>
        <begin position="250"/>
        <end position="252"/>
    </location>
</feature>
<feature type="helix" evidence="6">
    <location>
        <begin position="257"/>
        <end position="260"/>
    </location>
</feature>
<feature type="strand" evidence="6">
    <location>
        <begin position="262"/>
        <end position="264"/>
    </location>
</feature>
<feature type="helix" evidence="6">
    <location>
        <begin position="273"/>
        <end position="275"/>
    </location>
</feature>
<feature type="helix" evidence="6">
    <location>
        <begin position="294"/>
        <end position="309"/>
    </location>
</feature>
<feature type="turn" evidence="6">
    <location>
        <begin position="310"/>
        <end position="312"/>
    </location>
</feature>
<feature type="helix" evidence="6">
    <location>
        <begin position="316"/>
        <end position="320"/>
    </location>
</feature>
<feature type="helix" evidence="6">
    <location>
        <begin position="336"/>
        <end position="339"/>
    </location>
</feature>
<feature type="helix" evidence="6">
    <location>
        <begin position="342"/>
        <end position="349"/>
    </location>
</feature>
<feature type="strand" evidence="6">
    <location>
        <begin position="352"/>
        <end position="355"/>
    </location>
</feature>
<feature type="turn" evidence="6">
    <location>
        <begin position="357"/>
        <end position="360"/>
    </location>
</feature>
<feature type="turn" evidence="6">
    <location>
        <begin position="362"/>
        <end position="364"/>
    </location>
</feature>
<feature type="helix" evidence="6">
    <location>
        <begin position="365"/>
        <end position="367"/>
    </location>
</feature>
<feature type="helix" evidence="6">
    <location>
        <begin position="371"/>
        <end position="385"/>
    </location>
</feature>
<feature type="helix" evidence="6">
    <location>
        <begin position="399"/>
        <end position="402"/>
    </location>
</feature>
<feature type="strand" evidence="6">
    <location>
        <begin position="405"/>
        <end position="409"/>
    </location>
</feature>
<feature type="strand" evidence="6">
    <location>
        <begin position="415"/>
        <end position="419"/>
    </location>
</feature>
<feature type="helix" evidence="6">
    <location>
        <begin position="420"/>
        <end position="423"/>
    </location>
</feature>
<feature type="turn" evidence="6">
    <location>
        <begin position="426"/>
        <end position="430"/>
    </location>
</feature>
<feature type="strand" evidence="6">
    <location>
        <begin position="431"/>
        <end position="433"/>
    </location>
</feature>
<comment type="function">
    <text evidence="4">Catalyzes the oxidation of mono- and o-diphenols to o-diquinones.</text>
</comment>
<comment type="catalytic activity">
    <reaction evidence="4">
        <text>2 catechol + O2 = 2 1,2-benzoquinone + 2 H2O</text>
        <dbReference type="Rhea" id="RHEA:21632"/>
        <dbReference type="ChEBI" id="CHEBI:15377"/>
        <dbReference type="ChEBI" id="CHEBI:15379"/>
        <dbReference type="ChEBI" id="CHEBI:17253"/>
        <dbReference type="ChEBI" id="CHEBI:18135"/>
        <dbReference type="EC" id="1.10.3.1"/>
    </reaction>
</comment>
<comment type="cofactor">
    <cofactor evidence="4">
        <name>Cu(2+)</name>
        <dbReference type="ChEBI" id="CHEBI:29036"/>
    </cofactor>
    <text evidence="4">Binds 2 copper ions per subunit.</text>
</comment>
<comment type="subcellular location">
    <subcellularLocation>
        <location>Plastid</location>
        <location>Chloroplast thylakoid lumen</location>
    </subcellularLocation>
</comment>
<comment type="similarity">
    <text evidence="5">Belongs to the tyrosinase family.</text>
</comment>
<name>PPO_VITVI</name>
<dbReference type="EC" id="1.10.3.1"/>
<dbReference type="EMBL" id="Z27411">
    <property type="protein sequence ID" value="CAA81798.1"/>
    <property type="molecule type" value="mRNA"/>
</dbReference>
<dbReference type="PDB" id="2P3X">
    <property type="method" value="X-ray"/>
    <property type="resolution" value="2.20 A"/>
    <property type="chains" value="A=104-442"/>
</dbReference>
<dbReference type="PDBsum" id="2P3X"/>
<dbReference type="SMR" id="P43311"/>
<dbReference type="PaxDb" id="29760-VIT_00s0480g00100.t01"/>
<dbReference type="BRENDA" id="1.10.3.1">
    <property type="organism ID" value="6671"/>
</dbReference>
<dbReference type="EvolutionaryTrace" id="P43311"/>
<dbReference type="ExpressionAtlas" id="P43311">
    <property type="expression patterns" value="baseline and differential"/>
</dbReference>
<dbReference type="GO" id="GO:0009543">
    <property type="term" value="C:chloroplast thylakoid lumen"/>
    <property type="evidence" value="ECO:0007669"/>
    <property type="project" value="UniProtKB-SubCell"/>
</dbReference>
<dbReference type="GO" id="GO:0004097">
    <property type="term" value="F:catechol oxidase activity"/>
    <property type="evidence" value="ECO:0007669"/>
    <property type="project" value="UniProtKB-EC"/>
</dbReference>
<dbReference type="GO" id="GO:0046872">
    <property type="term" value="F:metal ion binding"/>
    <property type="evidence" value="ECO:0007669"/>
    <property type="project" value="UniProtKB-KW"/>
</dbReference>
<dbReference type="GO" id="GO:0046148">
    <property type="term" value="P:pigment biosynthetic process"/>
    <property type="evidence" value="ECO:0007669"/>
    <property type="project" value="InterPro"/>
</dbReference>
<dbReference type="FunFam" id="1.10.1280.10:FF:000007">
    <property type="entry name" value="Polyphenol oxidase, chloroplastic"/>
    <property type="match status" value="1"/>
</dbReference>
<dbReference type="Gene3D" id="1.10.1280.10">
    <property type="entry name" value="Di-copper center containing domain from catechol oxidase"/>
    <property type="match status" value="1"/>
</dbReference>
<dbReference type="InterPro" id="IPR008922">
    <property type="entry name" value="Di-copper_centre_dom_sf"/>
</dbReference>
<dbReference type="InterPro" id="IPR013788">
    <property type="entry name" value="Hemocyanin/hexamerin"/>
</dbReference>
<dbReference type="InterPro" id="IPR016213">
    <property type="entry name" value="Polyphenol_oxidase"/>
</dbReference>
<dbReference type="InterPro" id="IPR022740">
    <property type="entry name" value="Polyphenol_oxidase_C"/>
</dbReference>
<dbReference type="InterPro" id="IPR022739">
    <property type="entry name" value="Polyphenol_oxidase_cen"/>
</dbReference>
<dbReference type="InterPro" id="IPR050316">
    <property type="entry name" value="Tyrosinase/Hemocyanin"/>
</dbReference>
<dbReference type="InterPro" id="IPR002227">
    <property type="entry name" value="Tyrosinase_Cu-bd"/>
</dbReference>
<dbReference type="PANTHER" id="PTHR11474:SF76">
    <property type="entry name" value="SHKT DOMAIN-CONTAINING PROTEIN"/>
    <property type="match status" value="1"/>
</dbReference>
<dbReference type="PANTHER" id="PTHR11474">
    <property type="entry name" value="TYROSINASE FAMILY MEMBER"/>
    <property type="match status" value="1"/>
</dbReference>
<dbReference type="Pfam" id="PF12142">
    <property type="entry name" value="PPO1_DWL"/>
    <property type="match status" value="1"/>
</dbReference>
<dbReference type="Pfam" id="PF12143">
    <property type="entry name" value="PPO1_KFDV"/>
    <property type="match status" value="1"/>
</dbReference>
<dbReference type="Pfam" id="PF00264">
    <property type="entry name" value="Tyrosinase"/>
    <property type="match status" value="1"/>
</dbReference>
<dbReference type="PIRSF" id="PIRSF000290">
    <property type="entry name" value="PPO_plant"/>
    <property type="match status" value="1"/>
</dbReference>
<dbReference type="PRINTS" id="PR00092">
    <property type="entry name" value="TYROSINASE"/>
</dbReference>
<dbReference type="SUPFAM" id="SSF48056">
    <property type="entry name" value="Di-copper centre-containing domain"/>
    <property type="match status" value="1"/>
</dbReference>
<dbReference type="PROSITE" id="PS00497">
    <property type="entry name" value="TYROSINASE_1"/>
    <property type="match status" value="1"/>
</dbReference>
<dbReference type="PROSITE" id="PS00498">
    <property type="entry name" value="TYROSINASE_2"/>
    <property type="match status" value="1"/>
</dbReference>
<evidence type="ECO:0000250" key="1">
    <source>
        <dbReference type="UniProtKB" id="Q9ZP19"/>
    </source>
</evidence>
<evidence type="ECO:0000255" key="2"/>
<evidence type="ECO:0000256" key="3">
    <source>
        <dbReference type="SAM" id="MobiDB-lite"/>
    </source>
</evidence>
<evidence type="ECO:0000269" key="4">
    <source>
    </source>
</evidence>
<evidence type="ECO:0000305" key="5"/>
<evidence type="ECO:0007829" key="6">
    <source>
        <dbReference type="PDB" id="2P3X"/>
    </source>
</evidence>